<protein>
    <recommendedName>
        <fullName>Putative peptide import ATP-binding protein BOV_A0347</fullName>
        <ecNumber>7.4.2.-</ecNumber>
    </recommendedName>
</protein>
<dbReference type="EC" id="7.4.2.-"/>
<dbReference type="EMBL" id="CP000709">
    <property type="protein sequence ID" value="ABQ62103.1"/>
    <property type="molecule type" value="Genomic_DNA"/>
</dbReference>
<dbReference type="RefSeq" id="WP_002966203.1">
    <property type="nucleotide sequence ID" value="NC_009504.1"/>
</dbReference>
<dbReference type="SMR" id="A5VU86"/>
<dbReference type="KEGG" id="bov:BOV_A0347"/>
<dbReference type="HOGENOM" id="CLU_000604_1_23_5"/>
<dbReference type="Proteomes" id="UP000006383">
    <property type="component" value="Chromosome II"/>
</dbReference>
<dbReference type="GO" id="GO:0005886">
    <property type="term" value="C:plasma membrane"/>
    <property type="evidence" value="ECO:0007669"/>
    <property type="project" value="UniProtKB-SubCell"/>
</dbReference>
<dbReference type="GO" id="GO:0005524">
    <property type="term" value="F:ATP binding"/>
    <property type="evidence" value="ECO:0007669"/>
    <property type="project" value="UniProtKB-KW"/>
</dbReference>
<dbReference type="GO" id="GO:0016887">
    <property type="term" value="F:ATP hydrolysis activity"/>
    <property type="evidence" value="ECO:0007669"/>
    <property type="project" value="InterPro"/>
</dbReference>
<dbReference type="GO" id="GO:0015833">
    <property type="term" value="P:peptide transport"/>
    <property type="evidence" value="ECO:0007669"/>
    <property type="project" value="UniProtKB-KW"/>
</dbReference>
<dbReference type="GO" id="GO:0015031">
    <property type="term" value="P:protein transport"/>
    <property type="evidence" value="ECO:0007669"/>
    <property type="project" value="UniProtKB-KW"/>
</dbReference>
<dbReference type="GO" id="GO:0055085">
    <property type="term" value="P:transmembrane transport"/>
    <property type="evidence" value="ECO:0007669"/>
    <property type="project" value="UniProtKB-ARBA"/>
</dbReference>
<dbReference type="CDD" id="cd03257">
    <property type="entry name" value="ABC_NikE_OppD_transporters"/>
    <property type="match status" value="1"/>
</dbReference>
<dbReference type="FunFam" id="3.40.50.300:FF:000016">
    <property type="entry name" value="Oligopeptide ABC transporter ATP-binding component"/>
    <property type="match status" value="1"/>
</dbReference>
<dbReference type="Gene3D" id="3.40.50.300">
    <property type="entry name" value="P-loop containing nucleotide triphosphate hydrolases"/>
    <property type="match status" value="1"/>
</dbReference>
<dbReference type="InterPro" id="IPR003593">
    <property type="entry name" value="AAA+_ATPase"/>
</dbReference>
<dbReference type="InterPro" id="IPR050319">
    <property type="entry name" value="ABC_transp_ATP-bind"/>
</dbReference>
<dbReference type="InterPro" id="IPR003439">
    <property type="entry name" value="ABC_transporter-like_ATP-bd"/>
</dbReference>
<dbReference type="InterPro" id="IPR017871">
    <property type="entry name" value="ABC_transporter-like_CS"/>
</dbReference>
<dbReference type="InterPro" id="IPR013563">
    <property type="entry name" value="Oligopep_ABC_C"/>
</dbReference>
<dbReference type="InterPro" id="IPR027417">
    <property type="entry name" value="P-loop_NTPase"/>
</dbReference>
<dbReference type="NCBIfam" id="TIGR01727">
    <property type="entry name" value="oligo_HPY"/>
    <property type="match status" value="1"/>
</dbReference>
<dbReference type="PANTHER" id="PTHR43776:SF7">
    <property type="entry name" value="D,D-DIPEPTIDE TRANSPORT ATP-BINDING PROTEIN DDPF-RELATED"/>
    <property type="match status" value="1"/>
</dbReference>
<dbReference type="PANTHER" id="PTHR43776">
    <property type="entry name" value="TRANSPORT ATP-BINDING PROTEIN"/>
    <property type="match status" value="1"/>
</dbReference>
<dbReference type="Pfam" id="PF00005">
    <property type="entry name" value="ABC_tran"/>
    <property type="match status" value="1"/>
</dbReference>
<dbReference type="Pfam" id="PF08352">
    <property type="entry name" value="oligo_HPY"/>
    <property type="match status" value="1"/>
</dbReference>
<dbReference type="SMART" id="SM00382">
    <property type="entry name" value="AAA"/>
    <property type="match status" value="1"/>
</dbReference>
<dbReference type="SUPFAM" id="SSF52540">
    <property type="entry name" value="P-loop containing nucleoside triphosphate hydrolases"/>
    <property type="match status" value="1"/>
</dbReference>
<dbReference type="PROSITE" id="PS00211">
    <property type="entry name" value="ABC_TRANSPORTER_1"/>
    <property type="match status" value="1"/>
</dbReference>
<dbReference type="PROSITE" id="PS50893">
    <property type="entry name" value="ABC_TRANSPORTER_2"/>
    <property type="match status" value="1"/>
</dbReference>
<keyword id="KW-0067">ATP-binding</keyword>
<keyword id="KW-0997">Cell inner membrane</keyword>
<keyword id="KW-1003">Cell membrane</keyword>
<keyword id="KW-0472">Membrane</keyword>
<keyword id="KW-0547">Nucleotide-binding</keyword>
<keyword id="KW-0571">Peptide transport</keyword>
<keyword id="KW-0653">Protein transport</keyword>
<keyword id="KW-1278">Translocase</keyword>
<keyword id="KW-0813">Transport</keyword>
<evidence type="ECO:0000250" key="1"/>
<evidence type="ECO:0000255" key="2">
    <source>
        <dbReference type="PROSITE-ProRule" id="PRU00434"/>
    </source>
</evidence>
<evidence type="ECO:0000305" key="3"/>
<name>Y2547_BRUO2</name>
<reference key="1">
    <citation type="journal article" date="2009" name="PLoS ONE">
        <title>Genome degradation in Brucella ovis corresponds with narrowing of its host range and tissue tropism.</title>
        <authorList>
            <person name="Tsolis R.M."/>
            <person name="Seshadri R."/>
            <person name="Santos R.L."/>
            <person name="Sangari F.J."/>
            <person name="Lobo J.M."/>
            <person name="de Jong M.F."/>
            <person name="Ren Q."/>
            <person name="Myers G."/>
            <person name="Brinkac L.M."/>
            <person name="Nelson W.C."/>
            <person name="Deboy R.T."/>
            <person name="Angiuoli S."/>
            <person name="Khouri H."/>
            <person name="Dimitrov G."/>
            <person name="Robinson J.R."/>
            <person name="Mulligan S."/>
            <person name="Walker R.L."/>
            <person name="Elzer P.E."/>
            <person name="Hassan K.A."/>
            <person name="Paulsen I.T."/>
        </authorList>
    </citation>
    <scope>NUCLEOTIDE SEQUENCE [LARGE SCALE GENOMIC DNA]</scope>
    <source>
        <strain>ATCC 25840 / 63/290 / NCTC 10512</strain>
    </source>
</reference>
<gene>
    <name type="ordered locus">BOV_A0347</name>
</gene>
<accession>A5VU86</accession>
<proteinExistence type="inferred from homology"/>
<sequence>MTETPLLSVRGLAKHYQTRSATLKILDNVSFDIARGEVVGLVGESGSGKTTIGRSVLRLIEPTAGQIMFDGADVATLSAREMRRQRRRMQYIFQDPFASLSPRMTIGEILMEGLNIQGIGTKAERLERARKALEQVELPPDTINRYAHEFSGGQRQRIGIARALTLEPDFIVADEPVSALDVSIQAQVVNLLRDLQQRLGLTMLFISHDLAVVEYICDRVIVLYLGRIMEIASSEDLYARPQHPYTRALLSAIPSPDPDARTERQILRGDIPSPANPPSGCVFRTRCPMAIDACATTVPQLREVRPGHFKACIRDNI</sequence>
<organism>
    <name type="scientific">Brucella ovis (strain ATCC 25840 / 63/290 / NCTC 10512)</name>
    <dbReference type="NCBI Taxonomy" id="444178"/>
    <lineage>
        <taxon>Bacteria</taxon>
        <taxon>Pseudomonadati</taxon>
        <taxon>Pseudomonadota</taxon>
        <taxon>Alphaproteobacteria</taxon>
        <taxon>Hyphomicrobiales</taxon>
        <taxon>Brucellaceae</taxon>
        <taxon>Brucella/Ochrobactrum group</taxon>
        <taxon>Brucella</taxon>
    </lineage>
</organism>
<feature type="chain" id="PRO_0000328699" description="Putative peptide import ATP-binding protein BOV_A0347">
    <location>
        <begin position="1"/>
        <end position="317"/>
    </location>
</feature>
<feature type="domain" description="ABC transporter" evidence="2">
    <location>
        <begin position="7"/>
        <end position="250"/>
    </location>
</feature>
<feature type="binding site" evidence="2">
    <location>
        <begin position="43"/>
        <end position="50"/>
    </location>
    <ligand>
        <name>ATP</name>
        <dbReference type="ChEBI" id="CHEBI:30616"/>
    </ligand>
</feature>
<comment type="function">
    <text evidence="1">Probably part of an ABC transporter complex that could be involved in peptide import. Probably responsible for energy coupling to the transport system (By similarity).</text>
</comment>
<comment type="subunit">
    <text evidence="3">The complex is composed of two ATP-binding proteins (BOV_A0347 and BOV_A0348), two transmembrane proteins (BOV_A0350 and BOV_A0351) and a solute-binding protein (BOV_A0352).</text>
</comment>
<comment type="subcellular location">
    <subcellularLocation>
        <location evidence="3">Cell inner membrane</location>
        <topology evidence="3">Peripheral membrane protein</topology>
    </subcellularLocation>
</comment>
<comment type="similarity">
    <text evidence="3">Belongs to the ABC transporter superfamily.</text>
</comment>